<evidence type="ECO:0000250" key="1"/>
<evidence type="ECO:0000305" key="2"/>
<dbReference type="EC" id="3.5.1.16"/>
<dbReference type="EMBL" id="Z97344">
    <property type="protein sequence ID" value="CAB10562.1"/>
    <property type="status" value="ALT_SEQ"/>
    <property type="molecule type" value="Genomic_DNA"/>
</dbReference>
<dbReference type="EMBL" id="AL021889">
    <property type="protein sequence ID" value="CAA17126.2"/>
    <property type="molecule type" value="Genomic_DNA"/>
</dbReference>
<dbReference type="EMBL" id="AL161547">
    <property type="protein sequence ID" value="CAB78785.1"/>
    <property type="status" value="ALT_INIT"/>
    <property type="molecule type" value="Genomic_DNA"/>
</dbReference>
<dbReference type="EMBL" id="CP002687">
    <property type="protein sequence ID" value="AEE83954.1"/>
    <property type="molecule type" value="Genomic_DNA"/>
</dbReference>
<dbReference type="EMBL" id="AF360346">
    <property type="protein sequence ID" value="AAK28643.1"/>
    <property type="molecule type" value="mRNA"/>
</dbReference>
<dbReference type="EMBL" id="AY070021">
    <property type="protein sequence ID" value="AAL47492.1"/>
    <property type="molecule type" value="mRNA"/>
</dbReference>
<dbReference type="PIR" id="B85200">
    <property type="entry name" value="B85200"/>
</dbReference>
<dbReference type="PIR" id="E71448">
    <property type="entry name" value="E71448"/>
</dbReference>
<dbReference type="PIR" id="T05069">
    <property type="entry name" value="T05069"/>
</dbReference>
<dbReference type="RefSeq" id="NP_193517.3">
    <molecule id="Q9C5C4-1"/>
    <property type="nucleotide sequence ID" value="NM_117892.5"/>
</dbReference>
<dbReference type="SMR" id="Q9C5C4"/>
<dbReference type="BioGRID" id="12799">
    <property type="interactions" value="12"/>
</dbReference>
<dbReference type="FunCoup" id="Q9C5C4">
    <property type="interactions" value="1103"/>
</dbReference>
<dbReference type="STRING" id="3702.Q9C5C4"/>
<dbReference type="iPTMnet" id="Q9C5C4"/>
<dbReference type="PaxDb" id="3702-AT4G17830.2"/>
<dbReference type="ProteomicsDB" id="244447">
    <molecule id="Q9C5C4-1"/>
</dbReference>
<dbReference type="EnsemblPlants" id="AT4G17830.1">
    <molecule id="Q9C5C4-1"/>
    <property type="protein sequence ID" value="AT4G17830.1"/>
    <property type="gene ID" value="AT4G17830"/>
</dbReference>
<dbReference type="GeneID" id="827506"/>
<dbReference type="Gramene" id="AT4G17830.1">
    <molecule id="Q9C5C4-1"/>
    <property type="protein sequence ID" value="AT4G17830.1"/>
    <property type="gene ID" value="AT4G17830"/>
</dbReference>
<dbReference type="KEGG" id="ath:AT4G17830"/>
<dbReference type="Araport" id="AT4G17830"/>
<dbReference type="TAIR" id="AT4G17830">
    <property type="gene designation" value="ATNAOD"/>
</dbReference>
<dbReference type="eggNOG" id="KOG2276">
    <property type="taxonomic scope" value="Eukaryota"/>
</dbReference>
<dbReference type="InParanoid" id="Q9C5C4"/>
<dbReference type="OMA" id="NEYCLFT"/>
<dbReference type="OrthoDB" id="7832001at2759"/>
<dbReference type="PhylomeDB" id="Q9C5C4"/>
<dbReference type="BioCyc" id="ARA:AT4G17830-MONOMER"/>
<dbReference type="BRENDA" id="3.5.1.16">
    <property type="organism ID" value="399"/>
</dbReference>
<dbReference type="UniPathway" id="UPA00068">
    <property type="reaction ID" value="UER00110"/>
</dbReference>
<dbReference type="PRO" id="PR:Q9C5C4"/>
<dbReference type="Proteomes" id="UP000006548">
    <property type="component" value="Chromosome 4"/>
</dbReference>
<dbReference type="ExpressionAtlas" id="Q9C5C4">
    <property type="expression patterns" value="baseline and differential"/>
</dbReference>
<dbReference type="GO" id="GO:0008777">
    <property type="term" value="F:acetylornithine deacetylase activity"/>
    <property type="evidence" value="ECO:0007669"/>
    <property type="project" value="UniProtKB-EC"/>
</dbReference>
<dbReference type="GO" id="GO:0046872">
    <property type="term" value="F:metal ion binding"/>
    <property type="evidence" value="ECO:0007669"/>
    <property type="project" value="UniProtKB-KW"/>
</dbReference>
<dbReference type="GO" id="GO:0006526">
    <property type="term" value="P:L-arginine biosynthetic process"/>
    <property type="evidence" value="ECO:0007669"/>
    <property type="project" value="UniProtKB-UniPathway"/>
</dbReference>
<dbReference type="CDD" id="cd08012">
    <property type="entry name" value="M20_ArgE-related"/>
    <property type="match status" value="1"/>
</dbReference>
<dbReference type="FunFam" id="3.40.630.10:FF:000119">
    <property type="entry name" value="Acetylornithine deacetylase, putative"/>
    <property type="match status" value="1"/>
</dbReference>
<dbReference type="FunFam" id="3.30.70.360:FF:000032">
    <property type="entry name" value="Peptidase M20/M25/M40 family protein"/>
    <property type="match status" value="1"/>
</dbReference>
<dbReference type="Gene3D" id="3.30.70.360">
    <property type="match status" value="1"/>
</dbReference>
<dbReference type="Gene3D" id="3.40.630.10">
    <property type="entry name" value="Zn peptidases"/>
    <property type="match status" value="1"/>
</dbReference>
<dbReference type="InterPro" id="IPR036264">
    <property type="entry name" value="Bact_exopeptidase_dim_dom"/>
</dbReference>
<dbReference type="InterPro" id="IPR002933">
    <property type="entry name" value="Peptidase_M20"/>
</dbReference>
<dbReference type="InterPro" id="IPR011650">
    <property type="entry name" value="Peptidase_M20_dimer"/>
</dbReference>
<dbReference type="InterPro" id="IPR050072">
    <property type="entry name" value="Peptidase_M20A"/>
</dbReference>
<dbReference type="PANTHER" id="PTHR43808">
    <property type="entry name" value="ACETYLORNITHINE DEACETYLASE"/>
    <property type="match status" value="1"/>
</dbReference>
<dbReference type="PANTHER" id="PTHR43808:SF3">
    <property type="entry name" value="ACETYLORNITHINE DEACETYLASE"/>
    <property type="match status" value="1"/>
</dbReference>
<dbReference type="Pfam" id="PF07687">
    <property type="entry name" value="M20_dimer"/>
    <property type="match status" value="1"/>
</dbReference>
<dbReference type="Pfam" id="PF01546">
    <property type="entry name" value="Peptidase_M20"/>
    <property type="match status" value="1"/>
</dbReference>
<dbReference type="SUPFAM" id="SSF55031">
    <property type="entry name" value="Bacterial exopeptidase dimerisation domain"/>
    <property type="match status" value="1"/>
</dbReference>
<dbReference type="SUPFAM" id="SSF53187">
    <property type="entry name" value="Zn-dependent exopeptidases"/>
    <property type="match status" value="1"/>
</dbReference>
<reference key="1">
    <citation type="journal article" date="1998" name="Nature">
        <title>Analysis of 1.9 Mb of contiguous sequence from chromosome 4 of Arabidopsis thaliana.</title>
        <authorList>
            <person name="Bevan M."/>
            <person name="Bancroft I."/>
            <person name="Bent E."/>
            <person name="Love K."/>
            <person name="Goodman H.M."/>
            <person name="Dean C."/>
            <person name="Bergkamp R."/>
            <person name="Dirkse W."/>
            <person name="van Staveren M."/>
            <person name="Stiekema W."/>
            <person name="Drost L."/>
            <person name="Ridley P."/>
            <person name="Hudson S.-A."/>
            <person name="Patel K."/>
            <person name="Murphy G."/>
            <person name="Piffanelli P."/>
            <person name="Wedler H."/>
            <person name="Wedler E."/>
            <person name="Wambutt R."/>
            <person name="Weitzenegger T."/>
            <person name="Pohl T."/>
            <person name="Terryn N."/>
            <person name="Gielen J."/>
            <person name="Villarroel R."/>
            <person name="De Clercq R."/>
            <person name="van Montagu M."/>
            <person name="Lecharny A."/>
            <person name="Aubourg S."/>
            <person name="Gy I."/>
            <person name="Kreis M."/>
            <person name="Lao N."/>
            <person name="Kavanagh T."/>
            <person name="Hempel S."/>
            <person name="Kotter P."/>
            <person name="Entian K.-D."/>
            <person name="Rieger M."/>
            <person name="Schaefer M."/>
            <person name="Funk B."/>
            <person name="Mueller-Auer S."/>
            <person name="Silvey M."/>
            <person name="James R."/>
            <person name="Monfort A."/>
            <person name="Pons A."/>
            <person name="Puigdomenech P."/>
            <person name="Douka A."/>
            <person name="Voukelatou E."/>
            <person name="Milioni D."/>
            <person name="Hatzopoulos P."/>
            <person name="Piravandi E."/>
            <person name="Obermaier B."/>
            <person name="Hilbert H."/>
            <person name="Duesterhoeft A."/>
            <person name="Moores T."/>
            <person name="Jones J.D.G."/>
            <person name="Eneva T."/>
            <person name="Palme K."/>
            <person name="Benes V."/>
            <person name="Rechmann S."/>
            <person name="Ansorge W."/>
            <person name="Cooke R."/>
            <person name="Berger C."/>
            <person name="Delseny M."/>
            <person name="Voet M."/>
            <person name="Volckaert G."/>
            <person name="Mewes H.-W."/>
            <person name="Klosterman S."/>
            <person name="Schueller C."/>
            <person name="Chalwatzis N."/>
        </authorList>
    </citation>
    <scope>NUCLEOTIDE SEQUENCE [LARGE SCALE GENOMIC DNA]</scope>
    <source>
        <strain>cv. Columbia</strain>
    </source>
</reference>
<reference key="2">
    <citation type="journal article" date="1999" name="Nature">
        <title>Sequence and analysis of chromosome 4 of the plant Arabidopsis thaliana.</title>
        <authorList>
            <person name="Mayer K.F.X."/>
            <person name="Schueller C."/>
            <person name="Wambutt R."/>
            <person name="Murphy G."/>
            <person name="Volckaert G."/>
            <person name="Pohl T."/>
            <person name="Duesterhoeft A."/>
            <person name="Stiekema W."/>
            <person name="Entian K.-D."/>
            <person name="Terryn N."/>
            <person name="Harris B."/>
            <person name="Ansorge W."/>
            <person name="Brandt P."/>
            <person name="Grivell L.A."/>
            <person name="Rieger M."/>
            <person name="Weichselgartner M."/>
            <person name="de Simone V."/>
            <person name="Obermaier B."/>
            <person name="Mache R."/>
            <person name="Mueller M."/>
            <person name="Kreis M."/>
            <person name="Delseny M."/>
            <person name="Puigdomenech P."/>
            <person name="Watson M."/>
            <person name="Schmidtheini T."/>
            <person name="Reichert B."/>
            <person name="Portetelle D."/>
            <person name="Perez-Alonso M."/>
            <person name="Boutry M."/>
            <person name="Bancroft I."/>
            <person name="Vos P."/>
            <person name="Hoheisel J."/>
            <person name="Zimmermann W."/>
            <person name="Wedler H."/>
            <person name="Ridley P."/>
            <person name="Langham S.-A."/>
            <person name="McCullagh B."/>
            <person name="Bilham L."/>
            <person name="Robben J."/>
            <person name="van der Schueren J."/>
            <person name="Grymonprez B."/>
            <person name="Chuang Y.-J."/>
            <person name="Vandenbussche F."/>
            <person name="Braeken M."/>
            <person name="Weltjens I."/>
            <person name="Voet M."/>
            <person name="Bastiaens I."/>
            <person name="Aert R."/>
            <person name="Defoor E."/>
            <person name="Weitzenegger T."/>
            <person name="Bothe G."/>
            <person name="Ramsperger U."/>
            <person name="Hilbert H."/>
            <person name="Braun M."/>
            <person name="Holzer E."/>
            <person name="Brandt A."/>
            <person name="Peters S."/>
            <person name="van Staveren M."/>
            <person name="Dirkse W."/>
            <person name="Mooijman P."/>
            <person name="Klein Lankhorst R."/>
            <person name="Rose M."/>
            <person name="Hauf J."/>
            <person name="Koetter P."/>
            <person name="Berneiser S."/>
            <person name="Hempel S."/>
            <person name="Feldpausch M."/>
            <person name="Lamberth S."/>
            <person name="Van den Daele H."/>
            <person name="De Keyser A."/>
            <person name="Buysshaert C."/>
            <person name="Gielen J."/>
            <person name="Villarroel R."/>
            <person name="De Clercq R."/>
            <person name="van Montagu M."/>
            <person name="Rogers J."/>
            <person name="Cronin A."/>
            <person name="Quail M.A."/>
            <person name="Bray-Allen S."/>
            <person name="Clark L."/>
            <person name="Doggett J."/>
            <person name="Hall S."/>
            <person name="Kay M."/>
            <person name="Lennard N."/>
            <person name="McLay K."/>
            <person name="Mayes R."/>
            <person name="Pettett A."/>
            <person name="Rajandream M.A."/>
            <person name="Lyne M."/>
            <person name="Benes V."/>
            <person name="Rechmann S."/>
            <person name="Borkova D."/>
            <person name="Bloecker H."/>
            <person name="Scharfe M."/>
            <person name="Grimm M."/>
            <person name="Loehnert T.-H."/>
            <person name="Dose S."/>
            <person name="de Haan M."/>
            <person name="Maarse A.C."/>
            <person name="Schaefer M."/>
            <person name="Mueller-Auer S."/>
            <person name="Gabel C."/>
            <person name="Fuchs M."/>
            <person name="Fartmann B."/>
            <person name="Granderath K."/>
            <person name="Dauner D."/>
            <person name="Herzl A."/>
            <person name="Neumann S."/>
            <person name="Argiriou A."/>
            <person name="Vitale D."/>
            <person name="Liguori R."/>
            <person name="Piravandi E."/>
            <person name="Massenet O."/>
            <person name="Quigley F."/>
            <person name="Clabauld G."/>
            <person name="Muendlein A."/>
            <person name="Felber R."/>
            <person name="Schnabl S."/>
            <person name="Hiller R."/>
            <person name="Schmidt W."/>
            <person name="Lecharny A."/>
            <person name="Aubourg S."/>
            <person name="Chefdor F."/>
            <person name="Cooke R."/>
            <person name="Berger C."/>
            <person name="Monfort A."/>
            <person name="Casacuberta E."/>
            <person name="Gibbons T."/>
            <person name="Weber N."/>
            <person name="Vandenbol M."/>
            <person name="Bargues M."/>
            <person name="Terol J."/>
            <person name="Torres A."/>
            <person name="Perez-Perez A."/>
            <person name="Purnelle B."/>
            <person name="Bent E."/>
            <person name="Johnson S."/>
            <person name="Tacon D."/>
            <person name="Jesse T."/>
            <person name="Heijnen L."/>
            <person name="Schwarz S."/>
            <person name="Scholler P."/>
            <person name="Heber S."/>
            <person name="Francs P."/>
            <person name="Bielke C."/>
            <person name="Frishman D."/>
            <person name="Haase D."/>
            <person name="Lemcke K."/>
            <person name="Mewes H.-W."/>
            <person name="Stocker S."/>
            <person name="Zaccaria P."/>
            <person name="Bevan M."/>
            <person name="Wilson R.K."/>
            <person name="de la Bastide M."/>
            <person name="Habermann K."/>
            <person name="Parnell L."/>
            <person name="Dedhia N."/>
            <person name="Gnoj L."/>
            <person name="Schutz K."/>
            <person name="Huang E."/>
            <person name="Spiegel L."/>
            <person name="Sekhon M."/>
            <person name="Murray J."/>
            <person name="Sheet P."/>
            <person name="Cordes M."/>
            <person name="Abu-Threideh J."/>
            <person name="Stoneking T."/>
            <person name="Kalicki J."/>
            <person name="Graves T."/>
            <person name="Harmon G."/>
            <person name="Edwards J."/>
            <person name="Latreille P."/>
            <person name="Courtney L."/>
            <person name="Cloud J."/>
            <person name="Abbott A."/>
            <person name="Scott K."/>
            <person name="Johnson D."/>
            <person name="Minx P."/>
            <person name="Bentley D."/>
            <person name="Fulton B."/>
            <person name="Miller N."/>
            <person name="Greco T."/>
            <person name="Kemp K."/>
            <person name="Kramer J."/>
            <person name="Fulton L."/>
            <person name="Mardis E."/>
            <person name="Dante M."/>
            <person name="Pepin K."/>
            <person name="Hillier L.W."/>
            <person name="Nelson J."/>
            <person name="Spieth J."/>
            <person name="Ryan E."/>
            <person name="Andrews S."/>
            <person name="Geisel C."/>
            <person name="Layman D."/>
            <person name="Du H."/>
            <person name="Ali J."/>
            <person name="Berghoff A."/>
            <person name="Jones K."/>
            <person name="Drone K."/>
            <person name="Cotton M."/>
            <person name="Joshu C."/>
            <person name="Antonoiu B."/>
            <person name="Zidanic M."/>
            <person name="Strong C."/>
            <person name="Sun H."/>
            <person name="Lamar B."/>
            <person name="Yordan C."/>
            <person name="Ma P."/>
            <person name="Zhong J."/>
            <person name="Preston R."/>
            <person name="Vil D."/>
            <person name="Shekher M."/>
            <person name="Matero A."/>
            <person name="Shah R."/>
            <person name="Swaby I.K."/>
            <person name="O'Shaughnessy A."/>
            <person name="Rodriguez M."/>
            <person name="Hoffman J."/>
            <person name="Till S."/>
            <person name="Granat S."/>
            <person name="Shohdy N."/>
            <person name="Hasegawa A."/>
            <person name="Hameed A."/>
            <person name="Lodhi M."/>
            <person name="Johnson A."/>
            <person name="Chen E."/>
            <person name="Marra M.A."/>
            <person name="Martienssen R."/>
            <person name="McCombie W.R."/>
        </authorList>
    </citation>
    <scope>NUCLEOTIDE SEQUENCE [LARGE SCALE GENOMIC DNA]</scope>
    <source>
        <strain>cv. Columbia</strain>
    </source>
</reference>
<reference key="3">
    <citation type="journal article" date="2017" name="Plant J.">
        <title>Araport11: a complete reannotation of the Arabidopsis thaliana reference genome.</title>
        <authorList>
            <person name="Cheng C.Y."/>
            <person name="Krishnakumar V."/>
            <person name="Chan A.P."/>
            <person name="Thibaud-Nissen F."/>
            <person name="Schobel S."/>
            <person name="Town C.D."/>
        </authorList>
    </citation>
    <scope>GENOME REANNOTATION</scope>
    <source>
        <strain>cv. Columbia</strain>
    </source>
</reference>
<reference key="4">
    <citation type="journal article" date="2003" name="Science">
        <title>Empirical analysis of transcriptional activity in the Arabidopsis genome.</title>
        <authorList>
            <person name="Yamada K."/>
            <person name="Lim J."/>
            <person name="Dale J.M."/>
            <person name="Chen H."/>
            <person name="Shinn P."/>
            <person name="Palm C.J."/>
            <person name="Southwick A.M."/>
            <person name="Wu H.C."/>
            <person name="Kim C.J."/>
            <person name="Nguyen M."/>
            <person name="Pham P.K."/>
            <person name="Cheuk R.F."/>
            <person name="Karlin-Newmann G."/>
            <person name="Liu S.X."/>
            <person name="Lam B."/>
            <person name="Sakano H."/>
            <person name="Wu T."/>
            <person name="Yu G."/>
            <person name="Miranda M."/>
            <person name="Quach H.L."/>
            <person name="Tripp M."/>
            <person name="Chang C.H."/>
            <person name="Lee J.M."/>
            <person name="Toriumi M.J."/>
            <person name="Chan M.M."/>
            <person name="Tang C.C."/>
            <person name="Onodera C.S."/>
            <person name="Deng J.M."/>
            <person name="Akiyama K."/>
            <person name="Ansari Y."/>
            <person name="Arakawa T."/>
            <person name="Banh J."/>
            <person name="Banno F."/>
            <person name="Bowser L."/>
            <person name="Brooks S.Y."/>
            <person name="Carninci P."/>
            <person name="Chao Q."/>
            <person name="Choy N."/>
            <person name="Enju A."/>
            <person name="Goldsmith A.D."/>
            <person name="Gurjal M."/>
            <person name="Hansen N.F."/>
            <person name="Hayashizaki Y."/>
            <person name="Johnson-Hopson C."/>
            <person name="Hsuan V.W."/>
            <person name="Iida K."/>
            <person name="Karnes M."/>
            <person name="Khan S."/>
            <person name="Koesema E."/>
            <person name="Ishida J."/>
            <person name="Jiang P.X."/>
            <person name="Jones T."/>
            <person name="Kawai J."/>
            <person name="Kamiya A."/>
            <person name="Meyers C."/>
            <person name="Nakajima M."/>
            <person name="Narusaka M."/>
            <person name="Seki M."/>
            <person name="Sakurai T."/>
            <person name="Satou M."/>
            <person name="Tamse R."/>
            <person name="Vaysberg M."/>
            <person name="Wallender E.K."/>
            <person name="Wong C."/>
            <person name="Yamamura Y."/>
            <person name="Yuan S."/>
            <person name="Shinozaki K."/>
            <person name="Davis R.W."/>
            <person name="Theologis A."/>
            <person name="Ecker J.R."/>
        </authorList>
    </citation>
    <scope>NUCLEOTIDE SEQUENCE [LARGE SCALE MRNA]</scope>
    <source>
        <strain>cv. Columbia</strain>
    </source>
</reference>
<comment type="catalytic activity">
    <reaction>
        <text>N(2)-acetyl-L-ornithine + H2O = L-ornithine + acetate</text>
        <dbReference type="Rhea" id="RHEA:15941"/>
        <dbReference type="ChEBI" id="CHEBI:15377"/>
        <dbReference type="ChEBI" id="CHEBI:30089"/>
        <dbReference type="ChEBI" id="CHEBI:46911"/>
        <dbReference type="ChEBI" id="CHEBI:57805"/>
        <dbReference type="EC" id="3.5.1.16"/>
    </reaction>
</comment>
<comment type="cofactor">
    <cofactor evidence="1">
        <name>Zn(2+)</name>
        <dbReference type="ChEBI" id="CHEBI:29105"/>
    </cofactor>
    <cofactor evidence="1">
        <name>Co(2+)</name>
        <dbReference type="ChEBI" id="CHEBI:48828"/>
    </cofactor>
    <text evidence="1">Binds 2 Zn(2+) or Co(2+) ions per subunit.</text>
</comment>
<comment type="pathway">
    <text>Amino-acid biosynthesis; L-arginine biosynthesis; L-ornithine from N(2)-acetyl-L-ornithine (linear): step 1/1.</text>
</comment>
<comment type="subunit">
    <text evidence="1">Homodimer.</text>
</comment>
<comment type="alternative products">
    <event type="alternative splicing"/>
    <isoform>
        <id>Q9C5C4-1</id>
        <name>1</name>
        <sequence type="displayed"/>
    </isoform>
    <text>A number of isoforms are produced. According to EST sequences.</text>
</comment>
<comment type="similarity">
    <text evidence="2">Belongs to the peptidase M20A family. ArgE subfamily.</text>
</comment>
<comment type="sequence caution" evidence="2">
    <conflict type="erroneous gene model prediction">
        <sequence resource="EMBL-CDS" id="CAB10562"/>
    </conflict>
</comment>
<comment type="sequence caution" evidence="2">
    <conflict type="erroneous initiation">
        <sequence resource="EMBL-CDS" id="CAB78785"/>
    </conflict>
    <text>Truncated N-terminus.</text>
</comment>
<accession>Q9C5C4</accession>
<accession>O23622</accession>
<accession>O49682</accession>
<protein>
    <recommendedName>
        <fullName>Acetylornithine deacetylase</fullName>
        <ecNumber>3.5.1.16</ecNumber>
    </recommendedName>
    <alternativeName>
        <fullName>N-acetylornithinase</fullName>
        <shortName>AO</shortName>
        <shortName>Acetylornithinase</shortName>
        <shortName>NAO</shortName>
    </alternativeName>
</protein>
<organism>
    <name type="scientific">Arabidopsis thaliana</name>
    <name type="common">Mouse-ear cress</name>
    <dbReference type="NCBI Taxonomy" id="3702"/>
    <lineage>
        <taxon>Eukaryota</taxon>
        <taxon>Viridiplantae</taxon>
        <taxon>Streptophyta</taxon>
        <taxon>Embryophyta</taxon>
        <taxon>Tracheophyta</taxon>
        <taxon>Spermatophyta</taxon>
        <taxon>Magnoliopsida</taxon>
        <taxon>eudicotyledons</taxon>
        <taxon>Gunneridae</taxon>
        <taxon>Pentapetalae</taxon>
        <taxon>rosids</taxon>
        <taxon>malvids</taxon>
        <taxon>Brassicales</taxon>
        <taxon>Brassicaceae</taxon>
        <taxon>Camelineae</taxon>
        <taxon>Arabidopsis</taxon>
    </lineage>
</organism>
<proteinExistence type="evidence at transcript level"/>
<name>ARGE_ARATH</name>
<keyword id="KW-0025">Alternative splicing</keyword>
<keyword id="KW-0028">Amino-acid biosynthesis</keyword>
<keyword id="KW-0055">Arginine biosynthesis</keyword>
<keyword id="KW-0170">Cobalt</keyword>
<keyword id="KW-0378">Hydrolase</keyword>
<keyword id="KW-0479">Metal-binding</keyword>
<keyword id="KW-1185">Reference proteome</keyword>
<keyword id="KW-0862">Zinc</keyword>
<sequence>MASSSKALIESIGSLDKDSYVSLLSKLIGESKFVQNNPPELIPQEDLIVKHVLDSLRPYSTETGGGPLVINHVAYHSGRGNLIVEYPGSVPGKILSFVGMHMDVVTANPDDWEFDPFSLSIDGDKLRGRGTTDCLGHVALVTELMKKLGQAKPALKSTVVAVFIASEENSSIPGVGVDMLVKDKLLDKLKSGPLYWIDTADKQPCVGTGGMIPWKLQFTGKLFHSGLAHKAINAMELAMEGLKEIQARFYRDFPPHPQEEVYGFATPSTMKPTQWCYPAGGINQIPGECTVSGDVRLTPFYDVKEVITKLQEYVDDINGNIERLETRGPVSKYVLPDENLRGRLTLSFDEASAGVACNLDSPGFHVLCKATEEVVGHVKPYSITGTLPLIRDLQDEGFDVQTSGYGLMATYHAKNEYCLLTDMCQGFDVFIRIISQLEQV</sequence>
<gene>
    <name type="ordered locus">At4g17830</name>
    <name type="ORF">dl4945w</name>
    <name type="ORF">T6K21</name>
</gene>
<feature type="chain" id="PRO_0000423420" description="Acetylornithine deacetylase">
    <location>
        <begin position="1"/>
        <end position="440"/>
    </location>
</feature>
<feature type="active site" evidence="1">
    <location>
        <position position="103"/>
    </location>
</feature>
<feature type="active site" description="Proton acceptor" evidence="1">
    <location>
        <position position="167"/>
    </location>
</feature>
<feature type="binding site" evidence="1">
    <location>
        <position position="101"/>
    </location>
    <ligand>
        <name>Zn(2+)</name>
        <dbReference type="ChEBI" id="CHEBI:29105"/>
        <label>1</label>
    </ligand>
</feature>
<feature type="binding site" evidence="1">
    <location>
        <position position="133"/>
    </location>
    <ligand>
        <name>Zn(2+)</name>
        <dbReference type="ChEBI" id="CHEBI:29105"/>
        <label>1</label>
    </ligand>
</feature>
<feature type="binding site" evidence="1">
    <location>
        <position position="133"/>
    </location>
    <ligand>
        <name>Zn(2+)</name>
        <dbReference type="ChEBI" id="CHEBI:29105"/>
        <label>2</label>
    </ligand>
</feature>
<feature type="binding site" evidence="1">
    <location>
        <position position="168"/>
    </location>
    <ligand>
        <name>Zn(2+)</name>
        <dbReference type="ChEBI" id="CHEBI:29105"/>
        <label>2</label>
    </ligand>
</feature>
<feature type="binding site" evidence="1">
    <location>
        <position position="412"/>
    </location>
    <ligand>
        <name>Zn(2+)</name>
        <dbReference type="ChEBI" id="CHEBI:29105"/>
        <label>2</label>
    </ligand>
</feature>